<evidence type="ECO:0000250" key="1">
    <source>
        <dbReference type="UniProtKB" id="P28879"/>
    </source>
</evidence>
<evidence type="ECO:0000255" key="2"/>
<evidence type="ECO:0000269" key="3">
    <source>
    </source>
</evidence>
<evidence type="ECO:0000303" key="4">
    <source>
    </source>
</evidence>
<evidence type="ECO:0000305" key="5"/>
<evidence type="ECO:0000305" key="6">
    <source>
    </source>
</evidence>
<feature type="signal peptide" evidence="2">
    <location>
        <begin position="1"/>
        <end position="20"/>
    </location>
</feature>
<feature type="propeptide" id="PRO_0000249803" evidence="3">
    <location>
        <begin position="21"/>
        <end position="47"/>
    </location>
</feature>
<feature type="peptide" id="PRO_0000249804" description="Conotoxin Vx2" evidence="3">
    <location>
        <begin position="48"/>
        <end position="68"/>
    </location>
</feature>
<feature type="disulfide bond" evidence="1">
    <location>
        <begin position="55"/>
        <end position="68"/>
    </location>
</feature>
<feature type="disulfide bond" evidence="1">
    <location>
        <begin position="56"/>
        <end position="61"/>
    </location>
</feature>
<feature type="disulfide bond" evidence="1">
    <location>
        <begin position="57"/>
        <end position="65"/>
    </location>
</feature>
<name>C2_CONVX</name>
<organism>
    <name type="scientific">Conus vexillum</name>
    <name type="common">Flag cone</name>
    <dbReference type="NCBI Taxonomy" id="89431"/>
    <lineage>
        <taxon>Eukaryota</taxon>
        <taxon>Metazoa</taxon>
        <taxon>Spiralia</taxon>
        <taxon>Lophotrochozoa</taxon>
        <taxon>Mollusca</taxon>
        <taxon>Gastropoda</taxon>
        <taxon>Caenogastropoda</taxon>
        <taxon>Neogastropoda</taxon>
        <taxon>Conoidea</taxon>
        <taxon>Conidae</taxon>
        <taxon>Conus</taxon>
        <taxon>Rhizoconus</taxon>
    </lineage>
</organism>
<reference key="1">
    <citation type="journal article" date="2006" name="Peptides">
        <title>A novel M-superfamily conotoxin with a unique motif from Conus vexillum.</title>
        <authorList>
            <person name="Jiang H."/>
            <person name="Wang C.-Z."/>
            <person name="Xu C.-Q."/>
            <person name="Fan C.-X."/>
            <person name="Dai X.-D."/>
            <person name="Chen J.-S."/>
            <person name="Chi C.-W."/>
        </authorList>
    </citation>
    <scope>NUCLEOTIDE SEQUENCE [MRNA]</scope>
    <scope>PROTEIN SEQUENCE OF 48-68</scope>
    <scope>SYNTHESIS OF 48-68</scope>
    <scope>MASS SPECTROMETRY</scope>
    <scope>BIOASSAY</scope>
    <scope>SUBCELLULAR LOCATION</scope>
    <source>
        <tissue>Venom</tissue>
        <tissue>Venom duct</tissue>
    </source>
</reference>
<protein>
    <recommendedName>
        <fullName evidence="4">Conotoxin Vx2</fullName>
    </recommendedName>
</protein>
<sequence>MMSKLGVLVTICLLLFPLTALPLDGDQPADHPAKRTQDHNLASPISAWIDPSHYCCCGGGCTDDCVNC</sequence>
<keyword id="KW-0903">Direct protein sequencing</keyword>
<keyword id="KW-1015">Disulfide bond</keyword>
<keyword id="KW-0528">Neurotoxin</keyword>
<keyword id="KW-0964">Secreted</keyword>
<keyword id="KW-0732">Signal</keyword>
<keyword id="KW-0800">Toxin</keyword>
<accession>Q8I6R2</accession>
<proteinExistence type="evidence at protein level"/>
<dbReference type="EMBL" id="AY161317">
    <property type="protein sequence ID" value="AAN78279.1"/>
    <property type="molecule type" value="mRNA"/>
</dbReference>
<dbReference type="ConoServer" id="823">
    <property type="toxin name" value="VxII precursor"/>
</dbReference>
<dbReference type="GO" id="GO:0005576">
    <property type="term" value="C:extracellular region"/>
    <property type="evidence" value="ECO:0007669"/>
    <property type="project" value="UniProtKB-SubCell"/>
</dbReference>
<dbReference type="GO" id="GO:0008200">
    <property type="term" value="F:ion channel inhibitor activity"/>
    <property type="evidence" value="ECO:0007669"/>
    <property type="project" value="InterPro"/>
</dbReference>
<dbReference type="GO" id="GO:0090729">
    <property type="term" value="F:toxin activity"/>
    <property type="evidence" value="ECO:0007669"/>
    <property type="project" value="UniProtKB-KW"/>
</dbReference>
<dbReference type="InterPro" id="IPR004214">
    <property type="entry name" value="Conotoxin"/>
</dbReference>
<dbReference type="Pfam" id="PF02950">
    <property type="entry name" value="Conotoxin"/>
    <property type="match status" value="1"/>
</dbReference>
<comment type="function">
    <text evidence="3">In vivo, elicits a series of symptoms, such as being sedative, tail stiffening and twisted jumping, when injected intracranially into mice.</text>
</comment>
<comment type="subcellular location">
    <subcellularLocation>
        <location evidence="3">Secreted</location>
    </subcellularLocation>
</comment>
<comment type="tissue specificity">
    <text evidence="6">Expressed by the venom duct.</text>
</comment>
<comment type="domain">
    <text evidence="5">The cysteine framework is II (CCC-C-C-C).</text>
</comment>
<comment type="mass spectrometry"/>
<comment type="miscellaneous">
    <text evidence="6">Negative results: does not target potassium and sodium channels of locust DUM neurons.</text>
</comment>
<comment type="similarity">
    <text evidence="5">Belongs to the conotoxin M superfamily.</text>
</comment>